<comment type="function">
    <text evidence="3 6 7 8">ATP-dependent chromatin-remodeling factor, it slides nucleosomes along DNA; nucleosome sliding requires ATP. Acts as a transcription repressor by remodeling chromatin structure and recruiting histone H1 to target genes. Suppresses p53/TP53-mediated apoptosis by recruiting histone H1 and preventing p53/TP53 transactivation activity. Acts as a negative regulator of Wnt signaling pathway by regulating beta-catenin (CTNNB1) activity. Negatively regulates CTNNB1-targeted gene expression by being recruited specifically to the promoter regions of several CTNNB1 responsive genes. Involved in both enhancer blocking and epigenetic remodeling at chromatin boundary via its interaction with CTCF. Acts as a suppressor of STAT3 activity by suppressing the LIF-induced STAT3 transcriptional activity. Also acts as a transcription activator via its interaction with ZNF143 by participating in efficient U6 RNA polymerase III transcription. Regulates alternative splicing of a core group of genes involved in neuronal differentiation, cell cycle and DNA repair. Enables H3K36me3-coupled transcription elongation and co-transcriptional RNA processing likely via interaction with HNRNPL.</text>
</comment>
<comment type="catalytic activity">
    <reaction evidence="3">
        <text>ATP + H2O = ADP + phosphate + H(+)</text>
        <dbReference type="Rhea" id="RHEA:13065"/>
        <dbReference type="ChEBI" id="CHEBI:15377"/>
        <dbReference type="ChEBI" id="CHEBI:15378"/>
        <dbReference type="ChEBI" id="CHEBI:30616"/>
        <dbReference type="ChEBI" id="CHEBI:43474"/>
        <dbReference type="ChEBI" id="CHEBI:456216"/>
    </reaction>
</comment>
<comment type="subunit">
    <text evidence="1 3 6 7 8">Interacts with CTNNB1 and PIAS3. Component of some MLL1/MLL complex, at least composed of the core components KMT2A/MLL1, ASH2L, HCFC1/HCF1, WDR5 and RBBP5, as well as the facultative components BACC1, CHD8, E2F6, HSP70, INO80C, KANSL1, LAS1L, MAX, MCRS1, MGA, KAT8/MOF, PELP1, PHF20, PRP31, RING2, RUVB1/TIP49A, RUVB2/TIP49B, SENP3, TAF1, TAF4, TAF6, TAF7, TAF9 and TEX10. Interacts with CHD7. Interacts with FAM124B (By similarity). Interacts with p53/TP53 and histone H1 (PubMed:19151705). Interacts with CTCF (PubMed:16949368). Interacts with TLK2 (By similarity). Interacts with HNRNPL in an RNA-dependent manner.</text>
</comment>
<comment type="interaction">
    <interactant intactId="EBI-1169080">
        <id>Q09XV5</id>
    </interactant>
    <interactant intactId="EBI-1029979">
        <id>P28033</id>
        <label>Cebpb</label>
    </interactant>
    <organismsDiffer>false</organismsDiffer>
    <experiments>2</experiments>
</comment>
<comment type="interaction">
    <interactant intactId="EBI-1169080">
        <id>Q09XV5</id>
    </interactant>
    <interactant intactId="EBI-932785">
        <id>Q61164</id>
        <label>Ctcf</label>
    </interactant>
    <organismsDiffer>false</organismsDiffer>
    <experiments>3</experiments>
</comment>
<comment type="subcellular location">
    <subcellularLocation>
        <location evidence="3 6 8">Nucleus</location>
    </subcellularLocation>
    <text evidence="3">Localizes to the promoter regions of several CTNNB1-responsive genes. Also present at known CTCF target sites.</text>
</comment>
<comment type="alternative products">
    <event type="alternative splicing"/>
    <isoform>
        <id>Q09XV5-1</id>
        <name>1</name>
        <sequence type="displayed"/>
    </isoform>
    <isoform>
        <id>Q09XV5-2</id>
        <name>2</name>
        <sequence type="described" ref="VSP_036676 VSP_036677"/>
    </isoform>
</comment>
<comment type="developmental stage">
    <text evidence="5">Expressed predominantly from early- to mid-stage mouse embryogenesis. Detected throughout embryos from 7.5 to 9.5 dpc but localizes predominantly in the brain, faces, branchial arches, limb buds, and tail buds of embryos at 10.5 dpc.</text>
</comment>
<comment type="PTM">
    <text evidence="3">Sumoylated.</text>
</comment>
<comment type="disruption phenotype">
    <text evidence="5 7">Death during early embryogenesis due to widespread apoptosis. Embryos manifest growth retardation from 5.5 dpc and developmental arrest accompanied by massive apoptosis at 7.5 dpc. They develop into an egg cylinder but do not form a primitive streak or mesoderm. Mice lacking both Tp53 and Chd8 ameliorate this developmental arrest.</text>
</comment>
<comment type="similarity">
    <text evidence="3">Belongs to the SNF2/RAD54 helicase family. CHD8 subfamily.</text>
</comment>
<comment type="sequence caution" evidence="10">
    <conflict type="miscellaneous discrepancy">
        <sequence resource="EMBL-CDS" id="BAC98203"/>
    </conflict>
    <text>Partially unspliced pre-RNA.</text>
</comment>
<protein>
    <recommendedName>
        <fullName evidence="3">Chromodomain-helicase-DNA-binding protein 8</fullName>
        <shortName evidence="3">CHD-8</shortName>
        <ecNumber evidence="3">3.6.4.-</ecNumber>
    </recommendedName>
    <alternativeName>
        <fullName evidence="3">ATP-dependent helicase CHD8</fullName>
    </alternativeName>
    <alternativeName>
        <fullName>Axis duplication inhibitor</fullName>
        <shortName>Duplin</shortName>
    </alternativeName>
</protein>
<feature type="chain" id="PRO_0000367310" description="Chromodomain-helicase-DNA-binding protein 8">
    <location>
        <begin position="1"/>
        <end position="2582"/>
    </location>
</feature>
<feature type="domain" description="Chromo 1" evidence="3">
    <location>
        <begin position="644"/>
        <end position="711"/>
    </location>
</feature>
<feature type="domain" description="Chromo 2" evidence="3">
    <location>
        <begin position="726"/>
        <end position="792"/>
    </location>
</feature>
<feature type="domain" description="Helicase ATP-binding" evidence="3">
    <location>
        <begin position="825"/>
        <end position="999"/>
    </location>
</feature>
<feature type="domain" description="Helicase C-terminal" evidence="3">
    <location>
        <begin position="1139"/>
        <end position="1290"/>
    </location>
</feature>
<feature type="region of interest" description="Disordered" evidence="4">
    <location>
        <begin position="22"/>
        <end position="111"/>
    </location>
</feature>
<feature type="region of interest" description="Disordered" evidence="4">
    <location>
        <begin position="136"/>
        <end position="155"/>
    </location>
</feature>
<feature type="region of interest" description="Disordered" evidence="4">
    <location>
        <begin position="253"/>
        <end position="283"/>
    </location>
</feature>
<feature type="region of interest" description="Disordered" evidence="4">
    <location>
        <begin position="349"/>
        <end position="377"/>
    </location>
</feature>
<feature type="region of interest" description="Disordered" evidence="4">
    <location>
        <begin position="475"/>
        <end position="585"/>
    </location>
</feature>
<feature type="region of interest" description="Disordered" evidence="4">
    <location>
        <begin position="598"/>
        <end position="617"/>
    </location>
</feature>
<feature type="region of interest" description="Disordered" evidence="4">
    <location>
        <begin position="1694"/>
        <end position="1715"/>
    </location>
</feature>
<feature type="region of interest" description="Interaction with FAM124B" evidence="3">
    <location>
        <begin position="1791"/>
        <end position="2304"/>
    </location>
</feature>
<feature type="region of interest" description="Disordered" evidence="4">
    <location>
        <begin position="1990"/>
        <end position="2019"/>
    </location>
</feature>
<feature type="region of interest" description="Disordered" evidence="4">
    <location>
        <begin position="2045"/>
        <end position="2120"/>
    </location>
</feature>
<feature type="region of interest" description="Disordered" evidence="4">
    <location>
        <begin position="2187"/>
        <end position="2233"/>
    </location>
</feature>
<feature type="region of interest" description="Disordered" evidence="4">
    <location>
        <begin position="2486"/>
        <end position="2582"/>
    </location>
</feature>
<feature type="short sequence motif" description="DEAH box" evidence="3">
    <location>
        <begin position="950"/>
        <end position="953"/>
    </location>
</feature>
<feature type="compositionally biased region" description="Polar residues" evidence="4">
    <location>
        <begin position="42"/>
        <end position="51"/>
    </location>
</feature>
<feature type="compositionally biased region" description="Polar residues" evidence="4">
    <location>
        <begin position="94"/>
        <end position="111"/>
    </location>
</feature>
<feature type="compositionally biased region" description="Polar residues" evidence="4">
    <location>
        <begin position="141"/>
        <end position="155"/>
    </location>
</feature>
<feature type="compositionally biased region" description="Low complexity" evidence="4">
    <location>
        <begin position="255"/>
        <end position="267"/>
    </location>
</feature>
<feature type="compositionally biased region" description="Pro residues" evidence="4">
    <location>
        <begin position="355"/>
        <end position="372"/>
    </location>
</feature>
<feature type="compositionally biased region" description="Basic and acidic residues" evidence="4">
    <location>
        <begin position="495"/>
        <end position="518"/>
    </location>
</feature>
<feature type="compositionally biased region" description="Basic residues" evidence="4">
    <location>
        <begin position="574"/>
        <end position="585"/>
    </location>
</feature>
<feature type="compositionally biased region" description="Acidic residues" evidence="4">
    <location>
        <begin position="2065"/>
        <end position="2074"/>
    </location>
</feature>
<feature type="compositionally biased region" description="Low complexity" evidence="4">
    <location>
        <begin position="2077"/>
        <end position="2096"/>
    </location>
</feature>
<feature type="compositionally biased region" description="Basic and acidic residues" evidence="4">
    <location>
        <begin position="2104"/>
        <end position="2118"/>
    </location>
</feature>
<feature type="compositionally biased region" description="Low complexity" evidence="4">
    <location>
        <begin position="2222"/>
        <end position="2233"/>
    </location>
</feature>
<feature type="compositionally biased region" description="Basic residues" evidence="4">
    <location>
        <begin position="2493"/>
        <end position="2511"/>
    </location>
</feature>
<feature type="compositionally biased region" description="Low complexity" evidence="4">
    <location>
        <begin position="2514"/>
        <end position="2529"/>
    </location>
</feature>
<feature type="compositionally biased region" description="Acidic residues" evidence="4">
    <location>
        <begin position="2537"/>
        <end position="2551"/>
    </location>
</feature>
<feature type="binding site" evidence="3">
    <location>
        <begin position="838"/>
        <end position="845"/>
    </location>
    <ligand>
        <name>ATP</name>
        <dbReference type="ChEBI" id="CHEBI:30616"/>
    </ligand>
</feature>
<feature type="modified residue" description="Phosphoserine" evidence="1">
    <location>
        <position position="434"/>
    </location>
</feature>
<feature type="modified residue" description="Phosphoserine" evidence="12">
    <location>
        <position position="555"/>
    </location>
</feature>
<feature type="modified residue" description="Phosphoserine" evidence="1">
    <location>
        <position position="564"/>
    </location>
</feature>
<feature type="modified residue" description="Phosphoserine" evidence="12">
    <location>
        <position position="1422"/>
    </location>
</feature>
<feature type="modified residue" description="Phosphoserine" evidence="12">
    <location>
        <position position="1426"/>
    </location>
</feature>
<feature type="modified residue" description="Phosphoserine" evidence="1">
    <location>
        <position position="1978"/>
    </location>
</feature>
<feature type="modified residue" description="Phosphoserine" evidence="1">
    <location>
        <position position="1980"/>
    </location>
</feature>
<feature type="modified residue" description="Phosphothreonine" evidence="1">
    <location>
        <position position="1995"/>
    </location>
</feature>
<feature type="modified residue" description="Phosphoserine" evidence="2">
    <location>
        <position position="1997"/>
    </location>
</feature>
<feature type="modified residue" description="Phosphoserine" evidence="12">
    <location>
        <position position="1999"/>
    </location>
</feature>
<feature type="modified residue" description="Phosphoserine" evidence="1">
    <location>
        <position position="2010"/>
    </location>
</feature>
<feature type="modified residue" description="Phosphoserine" evidence="11">
    <location>
        <position position="2040"/>
    </location>
</feature>
<feature type="modified residue" description="Phosphoserine" evidence="1">
    <location>
        <position position="2070"/>
    </location>
</feature>
<feature type="modified residue" description="Phosphoserine" evidence="1">
    <location>
        <position position="2072"/>
    </location>
</feature>
<feature type="modified residue" description="Phosphoserine" evidence="1">
    <location>
        <position position="2184"/>
    </location>
</feature>
<feature type="modified residue" description="Phosphoserine" evidence="12">
    <location>
        <position position="2202"/>
    </location>
</feature>
<feature type="modified residue" description="Phosphoserine" evidence="12">
    <location>
        <position position="2204"/>
    </location>
</feature>
<feature type="modified residue" description="Phosphothreonine" evidence="12">
    <location>
        <position position="2206"/>
    </location>
</feature>
<feature type="modified residue" description="Phosphoserine" evidence="12">
    <location>
        <position position="2213"/>
    </location>
</feature>
<feature type="modified residue" description="Phosphothreonine" evidence="12">
    <location>
        <position position="2217"/>
    </location>
</feature>
<feature type="modified residue" description="Phosphoserine" evidence="2">
    <location>
        <position position="2225"/>
    </location>
</feature>
<feature type="modified residue" description="Phosphoserine" evidence="1">
    <location>
        <position position="2520"/>
    </location>
</feature>
<feature type="cross-link" description="Glycyl lysine isopeptide (Lys-Gly) (interchain with G-Cter in SUMO)" evidence="3">
    <location>
        <position position="611"/>
    </location>
</feature>
<feature type="cross-link" description="Glycyl lysine isopeptide (Lys-Gly) (interchain with G-Cter in SUMO2)" evidence="1">
    <location>
        <position position="2027"/>
    </location>
</feature>
<feature type="cross-link" description="Glycyl lysine isopeptide (Lys-Gly) (interchain with G-Cter in SUMO2)" evidence="1">
    <location>
        <position position="2258"/>
    </location>
</feature>
<feature type="splice variant" id="VSP_036676" description="In isoform 2." evidence="9">
    <original>PVIYYLV</original>
    <variation>VSWARRT</variation>
    <location>
        <begin position="745"/>
        <end position="751"/>
    </location>
</feature>
<feature type="splice variant" id="VSP_036677" description="In isoform 2." evidence="9">
    <location>
        <begin position="752"/>
        <end position="2582"/>
    </location>
</feature>
<feature type="sequence conflict" description="In Ref. 2; AAW56421." evidence="10" ref="2">
    <original>T</original>
    <variation>A</variation>
    <location>
        <position position="21"/>
    </location>
</feature>
<feature type="sequence conflict" description="In Ref. 3; BAC98203." evidence="10" ref="3">
    <original>N</original>
    <variation>S</variation>
    <location>
        <position position="2020"/>
    </location>
</feature>
<feature type="sequence conflict" description="In Ref. 3; BAC98203." evidence="10" ref="3">
    <original>L</original>
    <variation>V</variation>
    <location>
        <position position="2298"/>
    </location>
</feature>
<dbReference type="EC" id="3.6.4.-" evidence="3"/>
<dbReference type="EMBL" id="DQ190419">
    <property type="protein sequence ID" value="ABB02259.1"/>
    <property type="molecule type" value="mRNA"/>
</dbReference>
<dbReference type="EMBL" id="AY863219">
    <property type="protein sequence ID" value="AAW56421.1"/>
    <property type="molecule type" value="mRNA"/>
</dbReference>
<dbReference type="EMBL" id="AK129393">
    <property type="protein sequence ID" value="BAC98203.2"/>
    <property type="status" value="ALT_SEQ"/>
    <property type="molecule type" value="Transcribed_RNA"/>
</dbReference>
<dbReference type="EMBL" id="AK160299">
    <property type="protein sequence ID" value="BAE35730.1"/>
    <property type="molecule type" value="mRNA"/>
</dbReference>
<dbReference type="CCDS" id="CCDS36919.1">
    <molecule id="Q09XV5-1"/>
</dbReference>
<dbReference type="RefSeq" id="NP_963999.2">
    <molecule id="Q09XV5-1"/>
    <property type="nucleotide sequence ID" value="NM_201637.3"/>
</dbReference>
<dbReference type="RefSeq" id="XP_006519539.1">
    <property type="nucleotide sequence ID" value="XM_006519476.3"/>
</dbReference>
<dbReference type="SMR" id="Q09XV5"/>
<dbReference type="BioGRID" id="212432">
    <property type="interactions" value="25"/>
</dbReference>
<dbReference type="FunCoup" id="Q09XV5">
    <property type="interactions" value="4122"/>
</dbReference>
<dbReference type="IntAct" id="Q09XV5">
    <property type="interactions" value="6"/>
</dbReference>
<dbReference type="MINT" id="Q09XV5"/>
<dbReference type="STRING" id="10090.ENSMUSP00000142890"/>
<dbReference type="GlyGen" id="Q09XV5">
    <property type="glycosylation" value="6 sites, 2 N-linked glycans (2 sites), 1 O-linked glycan (3 sites)"/>
</dbReference>
<dbReference type="iPTMnet" id="Q09XV5"/>
<dbReference type="PhosphoSitePlus" id="Q09XV5"/>
<dbReference type="jPOST" id="Q09XV5"/>
<dbReference type="PaxDb" id="10090-ENSMUSP00000087184"/>
<dbReference type="PeptideAtlas" id="Q09XV5"/>
<dbReference type="ProteomicsDB" id="281607">
    <molecule id="Q09XV5-1"/>
</dbReference>
<dbReference type="ProteomicsDB" id="281608">
    <molecule id="Q09XV5-2"/>
</dbReference>
<dbReference type="Pumba" id="Q09XV5"/>
<dbReference type="Antibodypedia" id="73">
    <property type="antibodies" value="127 antibodies from 21 providers"/>
</dbReference>
<dbReference type="Ensembl" id="ENSMUST00000089752.11">
    <molecule id="Q09XV5-1"/>
    <property type="protein sequence ID" value="ENSMUSP00000087184.5"/>
    <property type="gene ID" value="ENSMUSG00000053754.15"/>
</dbReference>
<dbReference type="Ensembl" id="ENSMUST00000200169.6">
    <molecule id="Q09XV5-1"/>
    <property type="protein sequence ID" value="ENSMUSP00000142890.2"/>
    <property type="gene ID" value="ENSMUSG00000053754.15"/>
</dbReference>
<dbReference type="GeneID" id="67772"/>
<dbReference type="KEGG" id="mmu:67772"/>
<dbReference type="UCSC" id="uc007tot.1">
    <molecule id="Q09XV5-1"/>
    <property type="organism name" value="mouse"/>
</dbReference>
<dbReference type="UCSC" id="uc007tov.1">
    <molecule id="Q09XV5-2"/>
    <property type="organism name" value="mouse"/>
</dbReference>
<dbReference type="AGR" id="MGI:1915022"/>
<dbReference type="CTD" id="57680"/>
<dbReference type="MGI" id="MGI:1915022">
    <property type="gene designation" value="Chd8"/>
</dbReference>
<dbReference type="VEuPathDB" id="HostDB:ENSMUSG00000053754"/>
<dbReference type="eggNOG" id="KOG0384">
    <property type="taxonomic scope" value="Eukaryota"/>
</dbReference>
<dbReference type="GeneTree" id="ENSGT00940000153649"/>
<dbReference type="InParanoid" id="Q09XV5"/>
<dbReference type="OMA" id="AYMEDHR"/>
<dbReference type="OrthoDB" id="5857104at2759"/>
<dbReference type="PhylomeDB" id="Q09XV5"/>
<dbReference type="TreeFam" id="TF313572"/>
<dbReference type="Reactome" id="R-MMU-3769402">
    <property type="pathway name" value="Deactivation of the beta-catenin transactivating complex"/>
</dbReference>
<dbReference type="BioGRID-ORCS" id="67772">
    <property type="hits" value="20 hits in 85 CRISPR screens"/>
</dbReference>
<dbReference type="ChiTaRS" id="Chd8">
    <property type="organism name" value="mouse"/>
</dbReference>
<dbReference type="PRO" id="PR:Q09XV5"/>
<dbReference type="Proteomes" id="UP000000589">
    <property type="component" value="Chromosome 14"/>
</dbReference>
<dbReference type="RNAct" id="Q09XV5">
    <property type="molecule type" value="protein"/>
</dbReference>
<dbReference type="Bgee" id="ENSMUSG00000053754">
    <property type="expression patterns" value="Expressed in embryonic post-anal tail and 281 other cell types or tissues"/>
</dbReference>
<dbReference type="ExpressionAtlas" id="Q09XV5">
    <property type="expression patterns" value="baseline and differential"/>
</dbReference>
<dbReference type="GO" id="GO:0071339">
    <property type="term" value="C:MLL1 complex"/>
    <property type="evidence" value="ECO:0000250"/>
    <property type="project" value="UniProtKB"/>
</dbReference>
<dbReference type="GO" id="GO:0005634">
    <property type="term" value="C:nucleus"/>
    <property type="evidence" value="ECO:0000314"/>
    <property type="project" value="UniProtKB"/>
</dbReference>
<dbReference type="GO" id="GO:0005524">
    <property type="term" value="F:ATP binding"/>
    <property type="evidence" value="ECO:0000250"/>
    <property type="project" value="UniProtKB"/>
</dbReference>
<dbReference type="GO" id="GO:0016887">
    <property type="term" value="F:ATP hydrolysis activity"/>
    <property type="evidence" value="ECO:0007669"/>
    <property type="project" value="RHEA"/>
</dbReference>
<dbReference type="GO" id="GO:0140658">
    <property type="term" value="F:ATP-dependent chromatin remodeler activity"/>
    <property type="evidence" value="ECO:0000250"/>
    <property type="project" value="UniProtKB"/>
</dbReference>
<dbReference type="GO" id="GO:0008013">
    <property type="term" value="F:beta-catenin binding"/>
    <property type="evidence" value="ECO:0000250"/>
    <property type="project" value="UniProtKB"/>
</dbReference>
<dbReference type="GO" id="GO:0003682">
    <property type="term" value="F:chromatin binding"/>
    <property type="evidence" value="ECO:0000314"/>
    <property type="project" value="MGI"/>
</dbReference>
<dbReference type="GO" id="GO:0003677">
    <property type="term" value="F:DNA binding"/>
    <property type="evidence" value="ECO:0000314"/>
    <property type="project" value="UniProtKB"/>
</dbReference>
<dbReference type="GO" id="GO:0003678">
    <property type="term" value="F:DNA helicase activity"/>
    <property type="evidence" value="ECO:0007669"/>
    <property type="project" value="UniProtKB-UniRule"/>
</dbReference>
<dbReference type="GO" id="GO:0042393">
    <property type="term" value="F:histone binding"/>
    <property type="evidence" value="ECO:0000314"/>
    <property type="project" value="UniProtKB"/>
</dbReference>
<dbReference type="GO" id="GO:0140002">
    <property type="term" value="F:histone H3K4me3 reader activity"/>
    <property type="evidence" value="ECO:0000250"/>
    <property type="project" value="UniProtKB"/>
</dbReference>
<dbReference type="GO" id="GO:0002039">
    <property type="term" value="F:p53 binding"/>
    <property type="evidence" value="ECO:0000353"/>
    <property type="project" value="UniProtKB"/>
</dbReference>
<dbReference type="GO" id="GO:0007420">
    <property type="term" value="P:brain development"/>
    <property type="evidence" value="ECO:0000315"/>
    <property type="project" value="MGI"/>
</dbReference>
<dbReference type="GO" id="GO:0006338">
    <property type="term" value="P:chromatin remodeling"/>
    <property type="evidence" value="ECO:0000250"/>
    <property type="project" value="UniProtKB"/>
</dbReference>
<dbReference type="GO" id="GO:0048565">
    <property type="term" value="P:digestive tract development"/>
    <property type="evidence" value="ECO:0000315"/>
    <property type="project" value="MGI"/>
</dbReference>
<dbReference type="GO" id="GO:0001701">
    <property type="term" value="P:in utero embryonic development"/>
    <property type="evidence" value="ECO:0000315"/>
    <property type="project" value="MGI"/>
</dbReference>
<dbReference type="GO" id="GO:0007616">
    <property type="term" value="P:long-term memory"/>
    <property type="evidence" value="ECO:0000315"/>
    <property type="project" value="MGI"/>
</dbReference>
<dbReference type="GO" id="GO:0006397">
    <property type="term" value="P:mRNA processing"/>
    <property type="evidence" value="ECO:0007669"/>
    <property type="project" value="Ensembl"/>
</dbReference>
<dbReference type="GO" id="GO:0043066">
    <property type="term" value="P:negative regulation of apoptotic process"/>
    <property type="evidence" value="ECO:0000314"/>
    <property type="project" value="UniProtKB"/>
</dbReference>
<dbReference type="GO" id="GO:0090090">
    <property type="term" value="P:negative regulation of canonical Wnt signaling pathway"/>
    <property type="evidence" value="ECO:0000250"/>
    <property type="project" value="UniProtKB"/>
</dbReference>
<dbReference type="GO" id="GO:0045892">
    <property type="term" value="P:negative regulation of DNA-templated transcription"/>
    <property type="evidence" value="ECO:0000314"/>
    <property type="project" value="UniProtKB"/>
</dbReference>
<dbReference type="GO" id="GO:2000270">
    <property type="term" value="P:negative regulation of fibroblast apoptotic process"/>
    <property type="evidence" value="ECO:0000314"/>
    <property type="project" value="MGI"/>
</dbReference>
<dbReference type="GO" id="GO:0000122">
    <property type="term" value="P:negative regulation of transcription by RNA polymerase II"/>
    <property type="evidence" value="ECO:0007669"/>
    <property type="project" value="Ensembl"/>
</dbReference>
<dbReference type="GO" id="GO:0030178">
    <property type="term" value="P:negative regulation of Wnt signaling pathway"/>
    <property type="evidence" value="ECO:0000250"/>
    <property type="project" value="UniProtKB"/>
</dbReference>
<dbReference type="GO" id="GO:0045893">
    <property type="term" value="P:positive regulation of DNA-templated transcription"/>
    <property type="evidence" value="ECO:0000250"/>
    <property type="project" value="UniProtKB"/>
</dbReference>
<dbReference type="GO" id="GO:0045944">
    <property type="term" value="P:positive regulation of transcription by RNA polymerase II"/>
    <property type="evidence" value="ECO:0000250"/>
    <property type="project" value="UniProtKB"/>
</dbReference>
<dbReference type="GO" id="GO:0045945">
    <property type="term" value="P:positive regulation of transcription by RNA polymerase III"/>
    <property type="evidence" value="ECO:0000250"/>
    <property type="project" value="UniProtKB"/>
</dbReference>
<dbReference type="GO" id="GO:0060134">
    <property type="term" value="P:prepulse inhibition"/>
    <property type="evidence" value="ECO:0000315"/>
    <property type="project" value="MGI"/>
</dbReference>
<dbReference type="GO" id="GO:0010468">
    <property type="term" value="P:regulation of gene expression"/>
    <property type="evidence" value="ECO:0000315"/>
    <property type="project" value="MGI"/>
</dbReference>
<dbReference type="GO" id="GO:0035176">
    <property type="term" value="P:social behavior"/>
    <property type="evidence" value="ECO:0000315"/>
    <property type="project" value="MGI"/>
</dbReference>
<dbReference type="GO" id="GO:0001964">
    <property type="term" value="P:startle response"/>
    <property type="evidence" value="ECO:0000315"/>
    <property type="project" value="MGI"/>
</dbReference>
<dbReference type="GO" id="GO:0016055">
    <property type="term" value="P:Wnt signaling pathway"/>
    <property type="evidence" value="ECO:0007669"/>
    <property type="project" value="UniProtKB-KW"/>
</dbReference>
<dbReference type="CDD" id="cd18668">
    <property type="entry name" value="CD1_tandem_CHD5-9_like"/>
    <property type="match status" value="1"/>
</dbReference>
<dbReference type="CDD" id="cd18663">
    <property type="entry name" value="CD2_tandem_CHD5-9_like"/>
    <property type="match status" value="1"/>
</dbReference>
<dbReference type="CDD" id="cd18793">
    <property type="entry name" value="SF2_C_SNF"/>
    <property type="match status" value="1"/>
</dbReference>
<dbReference type="FunFam" id="3.40.5.120:FF:000004">
    <property type="entry name" value="Chromodomain-helicase-DNA-binding protein 8"/>
    <property type="match status" value="1"/>
</dbReference>
<dbReference type="FunFam" id="2.40.50.40:FF:000001">
    <property type="entry name" value="chromodomain-helicase-DNA-binding protein 8 isoform X4"/>
    <property type="match status" value="1"/>
</dbReference>
<dbReference type="FunFam" id="2.40.50.40:FF:000005">
    <property type="entry name" value="chromodomain-helicase-DNA-binding protein 8 isoform X4"/>
    <property type="match status" value="1"/>
</dbReference>
<dbReference type="FunFam" id="3.40.50.10810:FF:000003">
    <property type="entry name" value="chromodomain-helicase-DNA-binding protein 8 isoform X4"/>
    <property type="match status" value="1"/>
</dbReference>
<dbReference type="FunFam" id="3.40.50.300:FF:000015">
    <property type="entry name" value="chromodomain-helicase-DNA-binding protein 9 isoform X1"/>
    <property type="match status" value="1"/>
</dbReference>
<dbReference type="Gene3D" id="2.40.50.40">
    <property type="match status" value="2"/>
</dbReference>
<dbReference type="Gene3D" id="3.40.5.120">
    <property type="match status" value="1"/>
</dbReference>
<dbReference type="Gene3D" id="1.10.10.60">
    <property type="entry name" value="Homeodomain-like"/>
    <property type="match status" value="1"/>
</dbReference>
<dbReference type="Gene3D" id="3.40.50.300">
    <property type="entry name" value="P-loop containing nucleotide triphosphate hydrolases"/>
    <property type="match status" value="1"/>
</dbReference>
<dbReference type="Gene3D" id="3.40.50.10810">
    <property type="entry name" value="Tandem AAA-ATPase domain"/>
    <property type="match status" value="1"/>
</dbReference>
<dbReference type="HAMAP" id="MF_03071">
    <property type="entry name" value="CHD8"/>
    <property type="match status" value="1"/>
</dbReference>
<dbReference type="InterPro" id="IPR006576">
    <property type="entry name" value="BRK_domain"/>
</dbReference>
<dbReference type="InterPro" id="IPR037259">
    <property type="entry name" value="BRK_sf"/>
</dbReference>
<dbReference type="InterPro" id="IPR051493">
    <property type="entry name" value="CHD"/>
</dbReference>
<dbReference type="InterPro" id="IPR034724">
    <property type="entry name" value="CHD8"/>
</dbReference>
<dbReference type="InterPro" id="IPR016197">
    <property type="entry name" value="Chromo-like_dom_sf"/>
</dbReference>
<dbReference type="InterPro" id="IPR000953">
    <property type="entry name" value="Chromo/chromo_shadow_dom"/>
</dbReference>
<dbReference type="InterPro" id="IPR023780">
    <property type="entry name" value="Chromo_domain"/>
</dbReference>
<dbReference type="InterPro" id="IPR014001">
    <property type="entry name" value="Helicase_ATP-bd"/>
</dbReference>
<dbReference type="InterPro" id="IPR001650">
    <property type="entry name" value="Helicase_C-like"/>
</dbReference>
<dbReference type="InterPro" id="IPR056342">
    <property type="entry name" value="HTH_CHD6-9"/>
</dbReference>
<dbReference type="InterPro" id="IPR027417">
    <property type="entry name" value="P-loop_NTPase"/>
</dbReference>
<dbReference type="InterPro" id="IPR038718">
    <property type="entry name" value="SNF2-like_sf"/>
</dbReference>
<dbReference type="InterPro" id="IPR049730">
    <property type="entry name" value="SNF2/RAD54-like_C"/>
</dbReference>
<dbReference type="InterPro" id="IPR000330">
    <property type="entry name" value="SNF2_N"/>
</dbReference>
<dbReference type="PANTHER" id="PTHR46850">
    <property type="entry name" value="CHROMODOMAIN-HELICASE-DNA-BINDING PROTEIN 9"/>
    <property type="match status" value="1"/>
</dbReference>
<dbReference type="PANTHER" id="PTHR46850:SF1">
    <property type="entry name" value="CHROMODOMAIN-HELICASE-DNA-BINDING PROTEIN 9"/>
    <property type="match status" value="1"/>
</dbReference>
<dbReference type="Pfam" id="PF07533">
    <property type="entry name" value="BRK"/>
    <property type="match status" value="1"/>
</dbReference>
<dbReference type="Pfam" id="PF00385">
    <property type="entry name" value="Chromo"/>
    <property type="match status" value="2"/>
</dbReference>
<dbReference type="Pfam" id="PF00271">
    <property type="entry name" value="Helicase_C"/>
    <property type="match status" value="1"/>
</dbReference>
<dbReference type="Pfam" id="PF23078">
    <property type="entry name" value="HTH_CHD6-9"/>
    <property type="match status" value="1"/>
</dbReference>
<dbReference type="Pfam" id="PF00176">
    <property type="entry name" value="SNF2-rel_dom"/>
    <property type="match status" value="1"/>
</dbReference>
<dbReference type="SMART" id="SM00592">
    <property type="entry name" value="BRK"/>
    <property type="match status" value="2"/>
</dbReference>
<dbReference type="SMART" id="SM00298">
    <property type="entry name" value="CHROMO"/>
    <property type="match status" value="2"/>
</dbReference>
<dbReference type="SMART" id="SM00487">
    <property type="entry name" value="DEXDc"/>
    <property type="match status" value="1"/>
</dbReference>
<dbReference type="SMART" id="SM00490">
    <property type="entry name" value="HELICc"/>
    <property type="match status" value="1"/>
</dbReference>
<dbReference type="SUPFAM" id="SSF160481">
    <property type="entry name" value="BRK domain-like"/>
    <property type="match status" value="1"/>
</dbReference>
<dbReference type="SUPFAM" id="SSF54160">
    <property type="entry name" value="Chromo domain-like"/>
    <property type="match status" value="2"/>
</dbReference>
<dbReference type="SUPFAM" id="SSF52540">
    <property type="entry name" value="P-loop containing nucleoside triphosphate hydrolases"/>
    <property type="match status" value="2"/>
</dbReference>
<dbReference type="PROSITE" id="PS50013">
    <property type="entry name" value="CHROMO_2"/>
    <property type="match status" value="1"/>
</dbReference>
<dbReference type="PROSITE" id="PS51192">
    <property type="entry name" value="HELICASE_ATP_BIND_1"/>
    <property type="match status" value="1"/>
</dbReference>
<dbReference type="PROSITE" id="PS51194">
    <property type="entry name" value="HELICASE_CTER"/>
    <property type="match status" value="1"/>
</dbReference>
<reference key="1">
    <citation type="journal article" date="2006" name="Mol. Cell">
        <title>CTCF-dependent chromatin insulator is linked to epigenetic remodeling.</title>
        <authorList>
            <person name="Ishihara K."/>
            <person name="Oshimura M."/>
            <person name="Nakao M."/>
        </authorList>
    </citation>
    <scope>NUCLEOTIDE SEQUENCE [MRNA] (ISOFORM 1)</scope>
    <scope>FUNCTION</scope>
    <scope>INTERACTION WITH CTCF</scope>
    <scope>SUBCELLULAR LOCATION</scope>
    <source>
        <tissue>Embryo</tissue>
    </source>
</reference>
<reference key="2">
    <citation type="journal article" date="2004" name="Mol. Cell. Biol.">
        <title>Early embryonic death in mice lacking the beta-catenin-binding protein Duplin.</title>
        <authorList>
            <person name="Nishiyama M."/>
            <person name="Nakayama K."/>
            <person name="Tsunematsu R."/>
            <person name="Tsukiyama T."/>
            <person name="Kikuchi A."/>
            <person name="Nakayama K.I."/>
        </authorList>
    </citation>
    <scope>NUCLEOTIDE SEQUENCE [MRNA] (ISOFORM 2)</scope>
    <scope>DISRUPTION PHENOTYPE</scope>
    <scope>DEVELOPMENTAL STAGE</scope>
</reference>
<reference key="3">
    <citation type="journal article" date="2003" name="DNA Res.">
        <title>Prediction of the coding sequences of mouse homologues of KIAA gene: III. The complete nucleotide sequences of 500 mouse KIAA-homologous cDNAs identified by screening of terminal sequences of cDNA clones randomly sampled from size-fractionated libraries.</title>
        <authorList>
            <person name="Okazaki N."/>
            <person name="Kikuno R."/>
            <person name="Ohara R."/>
            <person name="Inamoto S."/>
            <person name="Koseki H."/>
            <person name="Hiraoka S."/>
            <person name="Saga Y."/>
            <person name="Nagase T."/>
            <person name="Ohara O."/>
            <person name="Koga H."/>
        </authorList>
    </citation>
    <scope>NUCLEOTIDE SEQUENCE [LARGE SCALE MRNA] OF 1730-2582</scope>
    <source>
        <tissue>Brain</tissue>
    </source>
</reference>
<reference key="4">
    <citation type="journal article" date="2005" name="Science">
        <title>The transcriptional landscape of the mammalian genome.</title>
        <authorList>
            <person name="Carninci P."/>
            <person name="Kasukawa T."/>
            <person name="Katayama S."/>
            <person name="Gough J."/>
            <person name="Frith M.C."/>
            <person name="Maeda N."/>
            <person name="Oyama R."/>
            <person name="Ravasi T."/>
            <person name="Lenhard B."/>
            <person name="Wells C."/>
            <person name="Kodzius R."/>
            <person name="Shimokawa K."/>
            <person name="Bajic V.B."/>
            <person name="Brenner S.E."/>
            <person name="Batalov S."/>
            <person name="Forrest A.R."/>
            <person name="Zavolan M."/>
            <person name="Davis M.J."/>
            <person name="Wilming L.G."/>
            <person name="Aidinis V."/>
            <person name="Allen J.E."/>
            <person name="Ambesi-Impiombato A."/>
            <person name="Apweiler R."/>
            <person name="Aturaliya R.N."/>
            <person name="Bailey T.L."/>
            <person name="Bansal M."/>
            <person name="Baxter L."/>
            <person name="Beisel K.W."/>
            <person name="Bersano T."/>
            <person name="Bono H."/>
            <person name="Chalk A.M."/>
            <person name="Chiu K.P."/>
            <person name="Choudhary V."/>
            <person name="Christoffels A."/>
            <person name="Clutterbuck D.R."/>
            <person name="Crowe M.L."/>
            <person name="Dalla E."/>
            <person name="Dalrymple B.P."/>
            <person name="de Bono B."/>
            <person name="Della Gatta G."/>
            <person name="di Bernardo D."/>
            <person name="Down T."/>
            <person name="Engstrom P."/>
            <person name="Fagiolini M."/>
            <person name="Faulkner G."/>
            <person name="Fletcher C.F."/>
            <person name="Fukushima T."/>
            <person name="Furuno M."/>
            <person name="Futaki S."/>
            <person name="Gariboldi M."/>
            <person name="Georgii-Hemming P."/>
            <person name="Gingeras T.R."/>
            <person name="Gojobori T."/>
            <person name="Green R.E."/>
            <person name="Gustincich S."/>
            <person name="Harbers M."/>
            <person name="Hayashi Y."/>
            <person name="Hensch T.K."/>
            <person name="Hirokawa N."/>
            <person name="Hill D."/>
            <person name="Huminiecki L."/>
            <person name="Iacono M."/>
            <person name="Ikeo K."/>
            <person name="Iwama A."/>
            <person name="Ishikawa T."/>
            <person name="Jakt M."/>
            <person name="Kanapin A."/>
            <person name="Katoh M."/>
            <person name="Kawasawa Y."/>
            <person name="Kelso J."/>
            <person name="Kitamura H."/>
            <person name="Kitano H."/>
            <person name="Kollias G."/>
            <person name="Krishnan S.P."/>
            <person name="Kruger A."/>
            <person name="Kummerfeld S.K."/>
            <person name="Kurochkin I.V."/>
            <person name="Lareau L.F."/>
            <person name="Lazarevic D."/>
            <person name="Lipovich L."/>
            <person name="Liu J."/>
            <person name="Liuni S."/>
            <person name="McWilliam S."/>
            <person name="Madan Babu M."/>
            <person name="Madera M."/>
            <person name="Marchionni L."/>
            <person name="Matsuda H."/>
            <person name="Matsuzawa S."/>
            <person name="Miki H."/>
            <person name="Mignone F."/>
            <person name="Miyake S."/>
            <person name="Morris K."/>
            <person name="Mottagui-Tabar S."/>
            <person name="Mulder N."/>
            <person name="Nakano N."/>
            <person name="Nakauchi H."/>
            <person name="Ng P."/>
            <person name="Nilsson R."/>
            <person name="Nishiguchi S."/>
            <person name="Nishikawa S."/>
            <person name="Nori F."/>
            <person name="Ohara O."/>
            <person name="Okazaki Y."/>
            <person name="Orlando V."/>
            <person name="Pang K.C."/>
            <person name="Pavan W.J."/>
            <person name="Pavesi G."/>
            <person name="Pesole G."/>
            <person name="Petrovsky N."/>
            <person name="Piazza S."/>
            <person name="Reed J."/>
            <person name="Reid J.F."/>
            <person name="Ring B.Z."/>
            <person name="Ringwald M."/>
            <person name="Rost B."/>
            <person name="Ruan Y."/>
            <person name="Salzberg S.L."/>
            <person name="Sandelin A."/>
            <person name="Schneider C."/>
            <person name="Schoenbach C."/>
            <person name="Sekiguchi K."/>
            <person name="Semple C.A."/>
            <person name="Seno S."/>
            <person name="Sessa L."/>
            <person name="Sheng Y."/>
            <person name="Shibata Y."/>
            <person name="Shimada H."/>
            <person name="Shimada K."/>
            <person name="Silva D."/>
            <person name="Sinclair B."/>
            <person name="Sperling S."/>
            <person name="Stupka E."/>
            <person name="Sugiura K."/>
            <person name="Sultana R."/>
            <person name="Takenaka Y."/>
            <person name="Taki K."/>
            <person name="Tammoja K."/>
            <person name="Tan S.L."/>
            <person name="Tang S."/>
            <person name="Taylor M.S."/>
            <person name="Tegner J."/>
            <person name="Teichmann S.A."/>
            <person name="Ueda H.R."/>
            <person name="van Nimwegen E."/>
            <person name="Verardo R."/>
            <person name="Wei C.L."/>
            <person name="Yagi K."/>
            <person name="Yamanishi H."/>
            <person name="Zabarovsky E."/>
            <person name="Zhu S."/>
            <person name="Zimmer A."/>
            <person name="Hide W."/>
            <person name="Bult C."/>
            <person name="Grimmond S.M."/>
            <person name="Teasdale R.D."/>
            <person name="Liu E.T."/>
            <person name="Brusic V."/>
            <person name="Quackenbush J."/>
            <person name="Wahlestedt C."/>
            <person name="Mattick J.S."/>
            <person name="Hume D.A."/>
            <person name="Kai C."/>
            <person name="Sasaki D."/>
            <person name="Tomaru Y."/>
            <person name="Fukuda S."/>
            <person name="Kanamori-Katayama M."/>
            <person name="Suzuki M."/>
            <person name="Aoki J."/>
            <person name="Arakawa T."/>
            <person name="Iida J."/>
            <person name="Imamura K."/>
            <person name="Itoh M."/>
            <person name="Kato T."/>
            <person name="Kawaji H."/>
            <person name="Kawagashira N."/>
            <person name="Kawashima T."/>
            <person name="Kojima M."/>
            <person name="Kondo S."/>
            <person name="Konno H."/>
            <person name="Nakano K."/>
            <person name="Ninomiya N."/>
            <person name="Nishio T."/>
            <person name="Okada M."/>
            <person name="Plessy C."/>
            <person name="Shibata K."/>
            <person name="Shiraki T."/>
            <person name="Suzuki S."/>
            <person name="Tagami M."/>
            <person name="Waki K."/>
            <person name="Watahiki A."/>
            <person name="Okamura-Oho Y."/>
            <person name="Suzuki H."/>
            <person name="Kawai J."/>
            <person name="Hayashizaki Y."/>
        </authorList>
    </citation>
    <scope>NUCLEOTIDE SEQUENCE [LARGE SCALE MRNA] OF 2020-2582</scope>
    <source>
        <strain>C57BL/6J</strain>
        <tissue>Thymus</tissue>
    </source>
</reference>
<reference key="5">
    <citation type="journal article" date="2009" name="Immunity">
        <title>The phagosomal proteome in interferon-gamma-activated macrophages.</title>
        <authorList>
            <person name="Trost M."/>
            <person name="English L."/>
            <person name="Lemieux S."/>
            <person name="Courcelles M."/>
            <person name="Desjardins M."/>
            <person name="Thibault P."/>
        </authorList>
    </citation>
    <scope>PHOSPHORYLATION [LARGE SCALE ANALYSIS] AT SER-2040</scope>
    <scope>IDENTIFICATION BY MASS SPECTROMETRY [LARGE SCALE ANALYSIS]</scope>
</reference>
<reference key="6">
    <citation type="journal article" date="2009" name="Nat. Cell Biol.">
        <title>CHD8 suppresses p53-mediated apoptosis through histone H1 recruitment during early embryogenesis.</title>
        <authorList>
            <person name="Nishiyama M."/>
            <person name="Oshikawa K."/>
            <person name="Tsukada Y.I."/>
            <person name="Nakagawa T."/>
            <person name="Iemura S."/>
            <person name="Natsume T."/>
            <person name="Fan Y."/>
            <person name="Kikuchi A."/>
            <person name="Skoultchi A.I."/>
            <person name="Nakayama K.I."/>
        </authorList>
    </citation>
    <scope>FUNCTION</scope>
    <scope>DISRUPTION PHENOTYPE</scope>
    <scope>INTERACTION WITH TP53 AND HISTONE H1</scope>
</reference>
<reference key="7">
    <citation type="journal article" date="2010" name="Cell">
        <title>A tissue-specific atlas of mouse protein phosphorylation and expression.</title>
        <authorList>
            <person name="Huttlin E.L."/>
            <person name="Jedrychowski M.P."/>
            <person name="Elias J.E."/>
            <person name="Goswami T."/>
            <person name="Rad R."/>
            <person name="Beausoleil S.A."/>
            <person name="Villen J."/>
            <person name="Haas W."/>
            <person name="Sowa M.E."/>
            <person name="Gygi S.P."/>
        </authorList>
    </citation>
    <scope>PHOSPHORYLATION [LARGE SCALE ANALYSIS] AT SER-555; SER-1422; SER-1426; SER-1999; SER-2202; SER-2204; THR-2206; SER-2213 AND THR-2217</scope>
    <scope>IDENTIFICATION BY MASS SPECTROMETRY [LARGE SCALE ANALYSIS]</scope>
    <source>
        <tissue>Brain</tissue>
        <tissue>Brown adipose tissue</tissue>
        <tissue>Kidney</tissue>
        <tissue>Liver</tissue>
        <tissue>Lung</tissue>
        <tissue>Pancreas</tissue>
        <tissue>Spleen</tissue>
        <tissue>Testis</tissue>
    </source>
</reference>
<reference key="8">
    <citation type="journal article" date="2022" name="Nucleic Acids Res.">
        <title>CHD8 suppression impacts on histone H3 lysine 36 trimethylation and alters RNA alternative splicing.</title>
        <authorList>
            <person name="Kerschbamer E."/>
            <person name="Arnoldi M."/>
            <person name="Tripathi T."/>
            <person name="Pellegrini M."/>
            <person name="Maturi S."/>
            <person name="Erdin S."/>
            <person name="Salviato E."/>
            <person name="Di Leva F."/>
            <person name="Sebestyen E."/>
            <person name="Dassi E."/>
            <person name="Zarantonello G."/>
            <person name="Benelli M."/>
            <person name="Campos E."/>
            <person name="Basson M.A."/>
            <person name="Gusella J.F."/>
            <person name="Gustincich S."/>
            <person name="Piazza S."/>
            <person name="Demichelis F."/>
            <person name="Talkowski M.E."/>
            <person name="Ferrari F."/>
            <person name="Biagioli M."/>
        </authorList>
    </citation>
    <scope>FUNCTION</scope>
    <scope>SUBCELLULAR LOCATION</scope>
    <scope>INTERACTION WITH HNRNPL</scope>
</reference>
<sequence>MADPIMDLFDDPNLFGLDSLTDDSFNQVTQDPIEEALGLPSSLDSLDQMNQDGGGGDVGNSSASDLVPPPEETASTELPKESTAPAPESLTLHDYTTQPTSQEQPAQPVLQTSTPTAGLLQVSKSQEILSQGNPFMGVSATGVSPSNTGGQPSQSAPKIVILKAPPNSSVTGTHVAQIQAQGITSTAQPLVAGTANGGKVTFTKVLTGTPLRPGVSIVSGNTVLATKVPGNQAAVQRIVQPSRPVKQLVLQPVKGSAPAGNPGAAGPPLKPAVTLTSTPTQGESKRITLVLQQPQSGGPQGHRHVVLGSLPGKIVLQGNQLAALTQAKNAQGQPAKVVTIQLQVQQPQQKIQIVPQPPSSQPQPQPQPPPSAQPLTLSSVQQAQIMGPGQNPGQRLSVPLKMVLQPQAGSSQGASSGLSVVKVLSASEVAALSSPASCAPHTAGKTGMEENRRLEHQKKQEKANRIVAEAIARARARGEQNIPRVLNEDELPSVRPEEEGEKKRRKKSSGERLKEEKPKKSKTAAASKTKGKSKLNTITPVVGKKRKRNTSSDNSDVEVMPAQSPREDEESSIQKRRSNRQVKRKKYTEDLDIKITDDEEEEEVDVTGPIKPEPILPEPVQEPDGETLPSMQFFVENPSEEDAAIVDKVLSMRVVKKELPSGQYTEAEEFFVKYKNYSYLHCEWATISQLEKDKRIHQKLKRFKTKMAQMRHFFHEDEEPFNPDYVEVDRILDESHSVDKDNGEPVIYYLVKWCSLPYEDSTWELKEDVDEGKIREFKRIQSRHPELRRVNRPQANAWKKLELSHEYKNRNQLREYQLEGVNWLLFNWYNRQNCILADEMGLGKTIQSIAFLQEVYNVGIHGPFLVIAPLSTITNWEREFNTWTEMNTIVYHGSLASRQMIQQYEMYCKDSRGRLIPGAYKFDALITTFEMILSDCPELREIEWRCVIIDEAHRLKNRNCKLLDSLKHMDLEHKVLLTGTPLQNTVEELFSLLHFLEPSQFPSESEFLKDFGDLKTEEQVQKLQAILKPMMLRRLKEDVEKNLAPKQETIIEVELTNIQKKYYRAILEKNFSFLSKGAGHTNMPNLLNTMMELRKCCNHPYLINGAEEKILMEFREACHIIPQDFHLQAMVRSAGKLVLIDKLLPKLKAGGHKVLIFSQMVRCLDILEDYLIQRRYLYERIDGRVRGNLRQAAIDRFSKPDSDRFVFLLCTRAGGLGINLTAADTCIIFDSDWNPQNDLQAQARCHRIGQSKAVKVYRLITRNSYEREMFDKASLKLGLDKAVLQSMSGRDGNITGIQQFSKKEIEDLLRKGAYAAIMEEDDEGSKFCEEDIDQILLRRTTTITIESEGKGSTFAKASFVASENRTDISLDDPNFWQKWAKKADLDMDLLNSKNNLVIDTPRVRKQTRHFSTLKDDDLVEFSDLESEDDERPRSRRHDRHHTYGRTDCFRVEKHLLVYGWGRWRDILSHGRFKRRMTERDVETICRAILVYCLLHYRGDENIKSFIWDLISPAENGKTKELQNHSGLSIPVPRGRKGKKVKSQSTFDIHKADWIRKYNPDTLFQDESYKKHLKHQCNKVLLRVRMLYYLRQEVIGDQAEKVLGGAIASEIDIWFPVVDQLEVPTTWWDSEADKSLLIGVFKHGYEKYNTMRADPALCFLEKAGRPDDKAIAAEHRVLDNFSDLVEGIDFDKDCEDPEYKPLQGPPKDPDDEGDPLMMMDEEISVIDGEEAQVTQQPGHLFWPPGSALTARLRRLVTAYQRSYKREQMKMEAAERGDRRRRRCEAAFKLKEIARREKQQRWTRREQTDFYRVVSTFGVEYDPDNMQFHWDRFRTFARLDKKTDESLTKYFHGFVAMCRQVCRLPPAAGDEPPDPNLFIEPITEERASRTLYRIELLRRLREQVLCHPLLEDRLALCQPPGLELPKWWEPVRHDGELLRGAARHGVSQTDCNIMQDPDFSFLAARMNYMQNHQAGASAASLSRCSTPLLHQQCTSRTASPSPLRPDAPVEKSPEESTVQVPNLESLTLKLEDEVVARSRLTSQDYEVRVGSSDTAPLSRSVPPVKLEDEDDSDSELDLSKLSPSSSSSSSSSSSSSSTDESEDEKEEKLTADRSRPKLYDEESLLSLTMSQDGFPNEDGEQMTPELLLLQERQRASEWPKDRVLINRIDLVCQAVLSGKWPSNRRSQEVTAGGILGPGNHLLDSPSLTPGEDGDSPVPTPRSGSAASMAEEEASAVTTAAAQFTKLRRGMDEKEFTVQIKDEEGLKLTFQKHRLMANGVMGDGHPLFHKKKGNRKKLVELEVECMEEPNHLDLDLETRIPVINKVDGTLLVGDEAPRRAELEMWLQGHPEFAVDPRFLAYMEERRKQKWQRCKKNNKAELNCLGMEPVQPANSRNGKKGHYAETAFNRVLPGPVAPENSKKRVRRTRPDLSKMMALMQGGSTGSLSLHNTFQHSSSNLQSVSSLGHSSTTSASLPFMPFVMGAAAPPHVDSSTMLHHHHHHPHPHHHHHHHPGLRTTGYPSSPATTTSGTALRLPTLQPEDDDEEEDEEDDDLSQGYDSSERDFSLIDDPMMPANSDSSEDADD</sequence>
<organism>
    <name type="scientific">Mus musculus</name>
    <name type="common">Mouse</name>
    <dbReference type="NCBI Taxonomy" id="10090"/>
    <lineage>
        <taxon>Eukaryota</taxon>
        <taxon>Metazoa</taxon>
        <taxon>Chordata</taxon>
        <taxon>Craniata</taxon>
        <taxon>Vertebrata</taxon>
        <taxon>Euteleostomi</taxon>
        <taxon>Mammalia</taxon>
        <taxon>Eutheria</taxon>
        <taxon>Euarchontoglires</taxon>
        <taxon>Glires</taxon>
        <taxon>Rodentia</taxon>
        <taxon>Myomorpha</taxon>
        <taxon>Muroidea</taxon>
        <taxon>Muridae</taxon>
        <taxon>Murinae</taxon>
        <taxon>Mus</taxon>
        <taxon>Mus</taxon>
    </lineage>
</organism>
<keyword id="KW-0010">Activator</keyword>
<keyword id="KW-0025">Alternative splicing</keyword>
<keyword id="KW-0067">ATP-binding</keyword>
<keyword id="KW-0156">Chromatin regulator</keyword>
<keyword id="KW-0238">DNA-binding</keyword>
<keyword id="KW-0378">Hydrolase</keyword>
<keyword id="KW-1017">Isopeptide bond</keyword>
<keyword id="KW-0547">Nucleotide-binding</keyword>
<keyword id="KW-0539">Nucleus</keyword>
<keyword id="KW-0597">Phosphoprotein</keyword>
<keyword id="KW-1185">Reference proteome</keyword>
<keyword id="KW-0677">Repeat</keyword>
<keyword id="KW-0678">Repressor</keyword>
<keyword id="KW-0804">Transcription</keyword>
<keyword id="KW-0805">Transcription regulation</keyword>
<keyword id="KW-0832">Ubl conjugation</keyword>
<keyword id="KW-0879">Wnt signaling pathway</keyword>
<gene>
    <name evidence="3" type="primary">Chd8</name>
    <name type="synonym">Kiaa1564</name>
</gene>
<evidence type="ECO:0000250" key="1">
    <source>
        <dbReference type="UniProtKB" id="Q9HCK8"/>
    </source>
</evidence>
<evidence type="ECO:0000250" key="2">
    <source>
        <dbReference type="UniProtKB" id="Q9JIX5"/>
    </source>
</evidence>
<evidence type="ECO:0000255" key="3">
    <source>
        <dbReference type="HAMAP-Rule" id="MF_03071"/>
    </source>
</evidence>
<evidence type="ECO:0000256" key="4">
    <source>
        <dbReference type="SAM" id="MobiDB-lite"/>
    </source>
</evidence>
<evidence type="ECO:0000269" key="5">
    <source>
    </source>
</evidence>
<evidence type="ECO:0000269" key="6">
    <source>
    </source>
</evidence>
<evidence type="ECO:0000269" key="7">
    <source>
    </source>
</evidence>
<evidence type="ECO:0000269" key="8">
    <source>
    </source>
</evidence>
<evidence type="ECO:0000303" key="9">
    <source>
    </source>
</evidence>
<evidence type="ECO:0000305" key="10"/>
<evidence type="ECO:0007744" key="11">
    <source>
    </source>
</evidence>
<evidence type="ECO:0007744" key="12">
    <source>
    </source>
</evidence>
<accession>Q09XV5</accession>
<accession>Q3TV89</accession>
<accession>Q5I1Z2</accession>
<accession>Q6ZPM8</accession>
<name>CHD8_MOUSE</name>
<proteinExistence type="evidence at protein level"/>